<proteinExistence type="inferred from homology"/>
<reference key="1">
    <citation type="submission" date="2006-08" db="EMBL/GenBank/DDBJ databases">
        <title>Complete sequence of chromosome 1 of Shewanella sp. MR-7.</title>
        <authorList>
            <person name="Copeland A."/>
            <person name="Lucas S."/>
            <person name="Lapidus A."/>
            <person name="Barry K."/>
            <person name="Detter J.C."/>
            <person name="Glavina del Rio T."/>
            <person name="Hammon N."/>
            <person name="Israni S."/>
            <person name="Dalin E."/>
            <person name="Tice H."/>
            <person name="Pitluck S."/>
            <person name="Kiss H."/>
            <person name="Brettin T."/>
            <person name="Bruce D."/>
            <person name="Han C."/>
            <person name="Tapia R."/>
            <person name="Gilna P."/>
            <person name="Schmutz J."/>
            <person name="Larimer F."/>
            <person name="Land M."/>
            <person name="Hauser L."/>
            <person name="Kyrpides N."/>
            <person name="Mikhailova N."/>
            <person name="Nealson K."/>
            <person name="Konstantinidis K."/>
            <person name="Klappenbach J."/>
            <person name="Tiedje J."/>
            <person name="Richardson P."/>
        </authorList>
    </citation>
    <scope>NUCLEOTIDE SEQUENCE [LARGE SCALE GENOMIC DNA]</scope>
    <source>
        <strain>MR-7</strain>
    </source>
</reference>
<organism>
    <name type="scientific">Shewanella sp. (strain MR-7)</name>
    <dbReference type="NCBI Taxonomy" id="60481"/>
    <lineage>
        <taxon>Bacteria</taxon>
        <taxon>Pseudomonadati</taxon>
        <taxon>Pseudomonadota</taxon>
        <taxon>Gammaproteobacteria</taxon>
        <taxon>Alteromonadales</taxon>
        <taxon>Shewanellaceae</taxon>
        <taxon>Shewanella</taxon>
    </lineage>
</organism>
<comment type="function">
    <text evidence="1">Produces ATP from ADP in the presence of a proton gradient across the membrane.</text>
</comment>
<comment type="subunit">
    <text>F-type ATPases have 2 components, CF(1) - the catalytic core - and CF(0) - the membrane proton channel. CF(1) has five subunits: alpha(3), beta(3), gamma(1), delta(1), epsilon(1). CF(0) has three main subunits: a, b and c.</text>
</comment>
<comment type="subcellular location">
    <subcellularLocation>
        <location evidence="1">Cell inner membrane</location>
        <topology evidence="1">Peripheral membrane protein</topology>
    </subcellularLocation>
</comment>
<comment type="similarity">
    <text evidence="1">Belongs to the ATPase epsilon chain family.</text>
</comment>
<sequence>MAAMTVQLDIVSAESSIFSGRVASLQVTGSEGELGIMHGHAPLLSYIKPGMARIVKQDGSEEVFYLSGGLLEVQPSSVSVLADVVMRAKDIDEQAALEAKRRAEAHMATAGADFNYDAAMVELAKAMAQLRVVETIKKNIAR</sequence>
<keyword id="KW-0066">ATP synthesis</keyword>
<keyword id="KW-0997">Cell inner membrane</keyword>
<keyword id="KW-1003">Cell membrane</keyword>
<keyword id="KW-0139">CF(1)</keyword>
<keyword id="KW-0375">Hydrogen ion transport</keyword>
<keyword id="KW-0406">Ion transport</keyword>
<keyword id="KW-0472">Membrane</keyword>
<keyword id="KW-0813">Transport</keyword>
<feature type="chain" id="PRO_0000265891" description="ATP synthase epsilon chain">
    <location>
        <begin position="1"/>
        <end position="142"/>
    </location>
</feature>
<protein>
    <recommendedName>
        <fullName evidence="1">ATP synthase epsilon chain</fullName>
    </recommendedName>
    <alternativeName>
        <fullName evidence="1">ATP synthase F1 sector epsilon subunit</fullName>
    </alternativeName>
    <alternativeName>
        <fullName evidence="1">F-ATPase epsilon subunit</fullName>
    </alternativeName>
</protein>
<gene>
    <name evidence="1" type="primary">atpC</name>
    <name type="ordered locus">Shewmr7_4016</name>
</gene>
<name>ATPE_SHESR</name>
<dbReference type="EMBL" id="CP000444">
    <property type="protein sequence ID" value="ABI44993.1"/>
    <property type="molecule type" value="Genomic_DNA"/>
</dbReference>
<dbReference type="SMR" id="Q0HPG2"/>
<dbReference type="KEGG" id="shm:Shewmr7_4016"/>
<dbReference type="HOGENOM" id="CLU_084338_2_0_6"/>
<dbReference type="GO" id="GO:0005886">
    <property type="term" value="C:plasma membrane"/>
    <property type="evidence" value="ECO:0007669"/>
    <property type="project" value="UniProtKB-SubCell"/>
</dbReference>
<dbReference type="GO" id="GO:0045259">
    <property type="term" value="C:proton-transporting ATP synthase complex"/>
    <property type="evidence" value="ECO:0007669"/>
    <property type="project" value="UniProtKB-KW"/>
</dbReference>
<dbReference type="GO" id="GO:0005524">
    <property type="term" value="F:ATP binding"/>
    <property type="evidence" value="ECO:0007669"/>
    <property type="project" value="UniProtKB-UniRule"/>
</dbReference>
<dbReference type="GO" id="GO:0046933">
    <property type="term" value="F:proton-transporting ATP synthase activity, rotational mechanism"/>
    <property type="evidence" value="ECO:0007669"/>
    <property type="project" value="UniProtKB-UniRule"/>
</dbReference>
<dbReference type="CDD" id="cd12152">
    <property type="entry name" value="F1-ATPase_delta"/>
    <property type="match status" value="1"/>
</dbReference>
<dbReference type="FunFam" id="1.20.5.440:FF:000001">
    <property type="entry name" value="ATP synthase epsilon chain"/>
    <property type="match status" value="1"/>
</dbReference>
<dbReference type="FunFam" id="2.60.15.10:FF:000001">
    <property type="entry name" value="ATP synthase epsilon chain"/>
    <property type="match status" value="1"/>
</dbReference>
<dbReference type="Gene3D" id="1.20.5.440">
    <property type="entry name" value="ATP synthase delta/epsilon subunit, C-terminal domain"/>
    <property type="match status" value="1"/>
</dbReference>
<dbReference type="Gene3D" id="2.60.15.10">
    <property type="entry name" value="F0F1 ATP synthase delta/epsilon subunit, N-terminal"/>
    <property type="match status" value="1"/>
</dbReference>
<dbReference type="HAMAP" id="MF_00530">
    <property type="entry name" value="ATP_synth_epsil_bac"/>
    <property type="match status" value="1"/>
</dbReference>
<dbReference type="InterPro" id="IPR036794">
    <property type="entry name" value="ATP_F1_dsu/esu_C_sf"/>
</dbReference>
<dbReference type="InterPro" id="IPR001469">
    <property type="entry name" value="ATP_synth_F1_dsu/esu"/>
</dbReference>
<dbReference type="InterPro" id="IPR020546">
    <property type="entry name" value="ATP_synth_F1_dsu/esu_N"/>
</dbReference>
<dbReference type="InterPro" id="IPR020547">
    <property type="entry name" value="ATP_synth_F1_esu_C"/>
</dbReference>
<dbReference type="InterPro" id="IPR036771">
    <property type="entry name" value="ATPsynth_dsu/esu_N"/>
</dbReference>
<dbReference type="NCBIfam" id="TIGR01216">
    <property type="entry name" value="ATP_synt_epsi"/>
    <property type="match status" value="1"/>
</dbReference>
<dbReference type="NCBIfam" id="NF001847">
    <property type="entry name" value="PRK00571.1-4"/>
    <property type="match status" value="1"/>
</dbReference>
<dbReference type="PANTHER" id="PTHR13822">
    <property type="entry name" value="ATP SYNTHASE DELTA/EPSILON CHAIN"/>
    <property type="match status" value="1"/>
</dbReference>
<dbReference type="PANTHER" id="PTHR13822:SF10">
    <property type="entry name" value="ATP SYNTHASE EPSILON CHAIN, CHLOROPLASTIC"/>
    <property type="match status" value="1"/>
</dbReference>
<dbReference type="Pfam" id="PF00401">
    <property type="entry name" value="ATP-synt_DE"/>
    <property type="match status" value="1"/>
</dbReference>
<dbReference type="Pfam" id="PF02823">
    <property type="entry name" value="ATP-synt_DE_N"/>
    <property type="match status" value="1"/>
</dbReference>
<dbReference type="SUPFAM" id="SSF46604">
    <property type="entry name" value="Epsilon subunit of F1F0-ATP synthase C-terminal domain"/>
    <property type="match status" value="1"/>
</dbReference>
<dbReference type="SUPFAM" id="SSF51344">
    <property type="entry name" value="Epsilon subunit of F1F0-ATP synthase N-terminal domain"/>
    <property type="match status" value="1"/>
</dbReference>
<accession>Q0HPG2</accession>
<evidence type="ECO:0000255" key="1">
    <source>
        <dbReference type="HAMAP-Rule" id="MF_00530"/>
    </source>
</evidence>